<reference key="1">
    <citation type="journal article" date="2010" name="Genome Biol.">
        <title>Structure and dynamics of the pan-genome of Streptococcus pneumoniae and closely related species.</title>
        <authorList>
            <person name="Donati C."/>
            <person name="Hiller N.L."/>
            <person name="Tettelin H."/>
            <person name="Muzzi A."/>
            <person name="Croucher N.J."/>
            <person name="Angiuoli S.V."/>
            <person name="Oggioni M."/>
            <person name="Dunning Hotopp J.C."/>
            <person name="Hu F.Z."/>
            <person name="Riley D.R."/>
            <person name="Covacci A."/>
            <person name="Mitchell T.J."/>
            <person name="Bentley S.D."/>
            <person name="Kilian M."/>
            <person name="Ehrlich G.D."/>
            <person name="Rappuoli R."/>
            <person name="Moxon E.R."/>
            <person name="Masignani V."/>
        </authorList>
    </citation>
    <scope>NUCLEOTIDE SEQUENCE [LARGE SCALE GENOMIC DNA]</scope>
    <source>
        <strain>Hungary19A-6</strain>
    </source>
</reference>
<feature type="chain" id="PRO_1000098852" description="Protease HtpX homolog">
    <location>
        <begin position="1"/>
        <end position="299"/>
    </location>
</feature>
<feature type="transmembrane region" description="Helical" evidence="1">
    <location>
        <begin position="15"/>
        <end position="35"/>
    </location>
</feature>
<feature type="transmembrane region" description="Helical" evidence="1">
    <location>
        <begin position="39"/>
        <end position="59"/>
    </location>
</feature>
<feature type="transmembrane region" description="Helical" evidence="1">
    <location>
        <begin position="158"/>
        <end position="178"/>
    </location>
</feature>
<feature type="transmembrane region" description="Helical" evidence="1">
    <location>
        <begin position="198"/>
        <end position="218"/>
    </location>
</feature>
<feature type="active site" evidence="1">
    <location>
        <position position="144"/>
    </location>
</feature>
<feature type="binding site" evidence="1">
    <location>
        <position position="143"/>
    </location>
    <ligand>
        <name>Zn(2+)</name>
        <dbReference type="ChEBI" id="CHEBI:29105"/>
        <note>catalytic</note>
    </ligand>
</feature>
<feature type="binding site" evidence="1">
    <location>
        <position position="147"/>
    </location>
    <ligand>
        <name>Zn(2+)</name>
        <dbReference type="ChEBI" id="CHEBI:29105"/>
        <note>catalytic</note>
    </ligand>
</feature>
<feature type="binding site" evidence="1">
    <location>
        <position position="227"/>
    </location>
    <ligand>
        <name>Zn(2+)</name>
        <dbReference type="ChEBI" id="CHEBI:29105"/>
        <note>catalytic</note>
    </ligand>
</feature>
<comment type="cofactor">
    <cofactor evidence="1">
        <name>Zn(2+)</name>
        <dbReference type="ChEBI" id="CHEBI:29105"/>
    </cofactor>
    <text evidence="1">Binds 1 zinc ion per subunit.</text>
</comment>
<comment type="subcellular location">
    <subcellularLocation>
        <location evidence="1">Cell membrane</location>
        <topology evidence="1">Multi-pass membrane protein</topology>
    </subcellularLocation>
</comment>
<comment type="similarity">
    <text evidence="1">Belongs to the peptidase M48B family.</text>
</comment>
<name>HTPX_STRPI</name>
<keyword id="KW-1003">Cell membrane</keyword>
<keyword id="KW-0378">Hydrolase</keyword>
<keyword id="KW-0472">Membrane</keyword>
<keyword id="KW-0479">Metal-binding</keyword>
<keyword id="KW-0482">Metalloprotease</keyword>
<keyword id="KW-0645">Protease</keyword>
<keyword id="KW-0812">Transmembrane</keyword>
<keyword id="KW-1133">Transmembrane helix</keyword>
<keyword id="KW-0862">Zinc</keyword>
<proteinExistence type="inferred from homology"/>
<dbReference type="EC" id="3.4.24.-" evidence="1"/>
<dbReference type="EMBL" id="CP000936">
    <property type="protein sequence ID" value="ACA37295.1"/>
    <property type="molecule type" value="Genomic_DNA"/>
</dbReference>
<dbReference type="RefSeq" id="WP_000895736.1">
    <property type="nucleotide sequence ID" value="NC_010380.1"/>
</dbReference>
<dbReference type="KEGG" id="spv:SPH_1399"/>
<dbReference type="HOGENOM" id="CLU_042266_2_1_9"/>
<dbReference type="Proteomes" id="UP000002163">
    <property type="component" value="Chromosome"/>
</dbReference>
<dbReference type="GO" id="GO:0005886">
    <property type="term" value="C:plasma membrane"/>
    <property type="evidence" value="ECO:0007669"/>
    <property type="project" value="UniProtKB-SubCell"/>
</dbReference>
<dbReference type="GO" id="GO:0004222">
    <property type="term" value="F:metalloendopeptidase activity"/>
    <property type="evidence" value="ECO:0007669"/>
    <property type="project" value="UniProtKB-UniRule"/>
</dbReference>
<dbReference type="GO" id="GO:0008270">
    <property type="term" value="F:zinc ion binding"/>
    <property type="evidence" value="ECO:0007669"/>
    <property type="project" value="UniProtKB-UniRule"/>
</dbReference>
<dbReference type="GO" id="GO:0006508">
    <property type="term" value="P:proteolysis"/>
    <property type="evidence" value="ECO:0007669"/>
    <property type="project" value="UniProtKB-KW"/>
</dbReference>
<dbReference type="CDD" id="cd07340">
    <property type="entry name" value="M48B_Htpx_like"/>
    <property type="match status" value="1"/>
</dbReference>
<dbReference type="Gene3D" id="3.30.2010.10">
    <property type="entry name" value="Metalloproteases ('zincins'), catalytic domain"/>
    <property type="match status" value="1"/>
</dbReference>
<dbReference type="HAMAP" id="MF_00188">
    <property type="entry name" value="Pept_M48_protease_HtpX"/>
    <property type="match status" value="1"/>
</dbReference>
<dbReference type="InterPro" id="IPR050083">
    <property type="entry name" value="HtpX_protease"/>
</dbReference>
<dbReference type="InterPro" id="IPR022919">
    <property type="entry name" value="Pept_M48_protease_HtpX"/>
</dbReference>
<dbReference type="InterPro" id="IPR001915">
    <property type="entry name" value="Peptidase_M48"/>
</dbReference>
<dbReference type="NCBIfam" id="NF003425">
    <property type="entry name" value="PRK04897.1"/>
    <property type="match status" value="1"/>
</dbReference>
<dbReference type="PANTHER" id="PTHR43221">
    <property type="entry name" value="PROTEASE HTPX"/>
    <property type="match status" value="1"/>
</dbReference>
<dbReference type="PANTHER" id="PTHR43221:SF1">
    <property type="entry name" value="PROTEASE HTPX"/>
    <property type="match status" value="1"/>
</dbReference>
<dbReference type="Pfam" id="PF01435">
    <property type="entry name" value="Peptidase_M48"/>
    <property type="match status" value="1"/>
</dbReference>
<gene>
    <name evidence="1" type="primary">htpX</name>
    <name type="ordered locus">SPH_1399</name>
</gene>
<organism>
    <name type="scientific">Streptococcus pneumoniae (strain Hungary19A-6)</name>
    <dbReference type="NCBI Taxonomy" id="487214"/>
    <lineage>
        <taxon>Bacteria</taxon>
        <taxon>Bacillati</taxon>
        <taxon>Bacillota</taxon>
        <taxon>Bacilli</taxon>
        <taxon>Lactobacillales</taxon>
        <taxon>Streptococcaceae</taxon>
        <taxon>Streptococcus</taxon>
    </lineage>
</organism>
<sequence>MLFDQIASNKRKTWILLLVFFLLLALVGYAVGYLFIRSGLGGLVIALIIGFIYALSMIFQSTEIVMSMNGAREVDEQTAPDLYHVVEDMALVAQIPMPRVFIIDDPALNAFATGSNPQNAAVAATSGLLAIMNREELEAVMGHEVSHIRNYDIRISTIAVALVSAITMLSGMAGRMMWWGGAGRRRSDDDRDGNGLEIIMLVVSLLAIVLAPLAATLVQLAISRQREFLADASSVELTRNPQGMINALDKLDNSKPMSRHVDDASSALYINDPKKGGGFQKLFYTHPPISERIERLKQM</sequence>
<accession>B1IC73</accession>
<protein>
    <recommendedName>
        <fullName evidence="1">Protease HtpX homolog</fullName>
        <ecNumber evidence="1">3.4.24.-</ecNumber>
    </recommendedName>
</protein>
<evidence type="ECO:0000255" key="1">
    <source>
        <dbReference type="HAMAP-Rule" id="MF_00188"/>
    </source>
</evidence>